<comment type="similarity">
    <text evidence="1">Belongs to the UPF0102 family.</text>
</comment>
<reference key="1">
    <citation type="journal article" date="2004" name="Proc. Natl. Acad. Sci. U.S.A.">
        <title>The louse-borne human pathogen Bartonella quintana is a genomic derivative of the zoonotic agent Bartonella henselae.</title>
        <authorList>
            <person name="Alsmark U.C.M."/>
            <person name="Frank A.C."/>
            <person name="Karlberg E.O."/>
            <person name="Legault B.-A."/>
            <person name="Ardell D.H."/>
            <person name="Canbaeck B."/>
            <person name="Eriksson A.-S."/>
            <person name="Naeslund A.K."/>
            <person name="Handley S.A."/>
            <person name="Huvet M."/>
            <person name="La Scola B."/>
            <person name="Holmberg M."/>
            <person name="Andersson S.G.E."/>
        </authorList>
    </citation>
    <scope>NUCLEOTIDE SEQUENCE [LARGE SCALE GENOMIC DNA]</scope>
    <source>
        <strain>Toulouse</strain>
    </source>
</reference>
<dbReference type="EMBL" id="BX897700">
    <property type="protein sequence ID" value="CAF26448.1"/>
    <property type="molecule type" value="Genomic_DNA"/>
</dbReference>
<dbReference type="RefSeq" id="WP_011179673.1">
    <property type="nucleotide sequence ID" value="NC_005955.1"/>
</dbReference>
<dbReference type="SMR" id="Q6FZ21"/>
<dbReference type="KEGG" id="bqu:BQ09720"/>
<dbReference type="eggNOG" id="COG0792">
    <property type="taxonomic scope" value="Bacteria"/>
</dbReference>
<dbReference type="HOGENOM" id="CLU_115353_0_2_5"/>
<dbReference type="OrthoDB" id="9812968at2"/>
<dbReference type="Proteomes" id="UP000000597">
    <property type="component" value="Chromosome"/>
</dbReference>
<dbReference type="GO" id="GO:0003676">
    <property type="term" value="F:nucleic acid binding"/>
    <property type="evidence" value="ECO:0007669"/>
    <property type="project" value="InterPro"/>
</dbReference>
<dbReference type="Gene3D" id="3.40.1350.10">
    <property type="match status" value="1"/>
</dbReference>
<dbReference type="HAMAP" id="MF_00048">
    <property type="entry name" value="UPF0102"/>
    <property type="match status" value="1"/>
</dbReference>
<dbReference type="InterPro" id="IPR011335">
    <property type="entry name" value="Restrct_endonuc-II-like"/>
</dbReference>
<dbReference type="InterPro" id="IPR011856">
    <property type="entry name" value="tRNA_endonuc-like_dom_sf"/>
</dbReference>
<dbReference type="InterPro" id="IPR003509">
    <property type="entry name" value="UPF0102_YraN-like"/>
</dbReference>
<dbReference type="NCBIfam" id="NF009151">
    <property type="entry name" value="PRK12497.1-5"/>
    <property type="match status" value="1"/>
</dbReference>
<dbReference type="PANTHER" id="PTHR34039">
    <property type="entry name" value="UPF0102 PROTEIN YRAN"/>
    <property type="match status" value="1"/>
</dbReference>
<dbReference type="PANTHER" id="PTHR34039:SF1">
    <property type="entry name" value="UPF0102 PROTEIN YRAN"/>
    <property type="match status" value="1"/>
</dbReference>
<dbReference type="Pfam" id="PF02021">
    <property type="entry name" value="UPF0102"/>
    <property type="match status" value="1"/>
</dbReference>
<dbReference type="SUPFAM" id="SSF52980">
    <property type="entry name" value="Restriction endonuclease-like"/>
    <property type="match status" value="1"/>
</dbReference>
<protein>
    <recommendedName>
        <fullName evidence="1">UPF0102 protein BQ09720</fullName>
    </recommendedName>
</protein>
<proteinExistence type="inferred from homology"/>
<organism>
    <name type="scientific">Bartonella quintana (strain Toulouse)</name>
    <name type="common">Rochalimaea quintana</name>
    <dbReference type="NCBI Taxonomy" id="283165"/>
    <lineage>
        <taxon>Bacteria</taxon>
        <taxon>Pseudomonadati</taxon>
        <taxon>Pseudomonadota</taxon>
        <taxon>Alphaproteobacteria</taxon>
        <taxon>Hyphomicrobiales</taxon>
        <taxon>Bartonellaceae</taxon>
        <taxon>Bartonella</taxon>
    </lineage>
</organism>
<feature type="chain" id="PRO_0000336128" description="UPF0102 protein BQ09720">
    <location>
        <begin position="1"/>
        <end position="122"/>
    </location>
</feature>
<accession>Q6FZ21</accession>
<sequence length="122" mass="14484">MKKERRQKSFHRGVRAEKWAAWWLRFKWFHIAEIRFKTKCGEIDLIARRGNLVLIVEVKARSTLAEAMAAVSRMNERRIEAAADIWLARQKDRALLDVRFDLIAILPWRLPQHIPAFFTSDK</sequence>
<name>Y972_BARQU</name>
<evidence type="ECO:0000255" key="1">
    <source>
        <dbReference type="HAMAP-Rule" id="MF_00048"/>
    </source>
</evidence>
<gene>
    <name type="ordered locus">BQ09720</name>
</gene>